<protein>
    <recommendedName>
        <fullName evidence="1">Probable Fe(2+)-trafficking protein</fullName>
    </recommendedName>
</protein>
<sequence>MGRTVNCIKLGRELEGLDFPPYPGELGKRIFENVSKEAWAGWIRHQTMLVNEYHLNLSDIKARKYLAEQLDAYFFGSGAEQPRGYVPLAK</sequence>
<accession>Q2YC32</accession>
<dbReference type="EMBL" id="CP000103">
    <property type="protein sequence ID" value="ABB73689.1"/>
    <property type="molecule type" value="Genomic_DNA"/>
</dbReference>
<dbReference type="RefSeq" id="WP_011379743.1">
    <property type="nucleotide sequence ID" value="NC_007614.1"/>
</dbReference>
<dbReference type="SMR" id="Q2YC32"/>
<dbReference type="STRING" id="323848.Nmul_A0381"/>
<dbReference type="KEGG" id="nmu:Nmul_A0381"/>
<dbReference type="eggNOG" id="COG2924">
    <property type="taxonomic scope" value="Bacteria"/>
</dbReference>
<dbReference type="HOGENOM" id="CLU_170994_0_0_4"/>
<dbReference type="OrthoDB" id="9804318at2"/>
<dbReference type="Proteomes" id="UP000002718">
    <property type="component" value="Chromosome"/>
</dbReference>
<dbReference type="GO" id="GO:0005829">
    <property type="term" value="C:cytosol"/>
    <property type="evidence" value="ECO:0007669"/>
    <property type="project" value="TreeGrafter"/>
</dbReference>
<dbReference type="GO" id="GO:0005506">
    <property type="term" value="F:iron ion binding"/>
    <property type="evidence" value="ECO:0007669"/>
    <property type="project" value="UniProtKB-UniRule"/>
</dbReference>
<dbReference type="GO" id="GO:0034599">
    <property type="term" value="P:cellular response to oxidative stress"/>
    <property type="evidence" value="ECO:0007669"/>
    <property type="project" value="TreeGrafter"/>
</dbReference>
<dbReference type="FunFam" id="1.10.3880.10:FF:000001">
    <property type="entry name" value="Probable Fe(2+)-trafficking protein"/>
    <property type="match status" value="1"/>
</dbReference>
<dbReference type="Gene3D" id="1.10.3880.10">
    <property type="entry name" value="Fe(II) trafficking protein YggX"/>
    <property type="match status" value="1"/>
</dbReference>
<dbReference type="HAMAP" id="MF_00686">
    <property type="entry name" value="Fe_traffic_YggX"/>
    <property type="match status" value="1"/>
</dbReference>
<dbReference type="InterPro" id="IPR007457">
    <property type="entry name" value="Fe_traffick_prot_YggX"/>
</dbReference>
<dbReference type="InterPro" id="IPR036766">
    <property type="entry name" value="Fe_traffick_prot_YggX_sf"/>
</dbReference>
<dbReference type="NCBIfam" id="NF003817">
    <property type="entry name" value="PRK05408.1"/>
    <property type="match status" value="1"/>
</dbReference>
<dbReference type="PANTHER" id="PTHR36965">
    <property type="entry name" value="FE(2+)-TRAFFICKING PROTEIN-RELATED"/>
    <property type="match status" value="1"/>
</dbReference>
<dbReference type="PANTHER" id="PTHR36965:SF1">
    <property type="entry name" value="FE(2+)-TRAFFICKING PROTEIN-RELATED"/>
    <property type="match status" value="1"/>
</dbReference>
<dbReference type="Pfam" id="PF04362">
    <property type="entry name" value="Iron_traffic"/>
    <property type="match status" value="1"/>
</dbReference>
<dbReference type="PIRSF" id="PIRSF029827">
    <property type="entry name" value="Fe_traffic_YggX"/>
    <property type="match status" value="1"/>
</dbReference>
<dbReference type="SUPFAM" id="SSF111148">
    <property type="entry name" value="YggX-like"/>
    <property type="match status" value="1"/>
</dbReference>
<feature type="chain" id="PRO_0000246104" description="Probable Fe(2+)-trafficking protein">
    <location>
        <begin position="1"/>
        <end position="90"/>
    </location>
</feature>
<reference key="1">
    <citation type="submission" date="2005-08" db="EMBL/GenBank/DDBJ databases">
        <title>Complete sequence of chromosome 1 of Nitrosospira multiformis ATCC 25196.</title>
        <authorList>
            <person name="Copeland A."/>
            <person name="Lucas S."/>
            <person name="Lapidus A."/>
            <person name="Barry K."/>
            <person name="Detter J.C."/>
            <person name="Glavina T."/>
            <person name="Hammon N."/>
            <person name="Israni S."/>
            <person name="Pitluck S."/>
            <person name="Chain P."/>
            <person name="Malfatti S."/>
            <person name="Shin M."/>
            <person name="Vergez L."/>
            <person name="Schmutz J."/>
            <person name="Larimer F."/>
            <person name="Land M."/>
            <person name="Hauser L."/>
            <person name="Kyrpides N."/>
            <person name="Lykidis A."/>
            <person name="Richardson P."/>
        </authorList>
    </citation>
    <scope>NUCLEOTIDE SEQUENCE [LARGE SCALE GENOMIC DNA]</scope>
    <source>
        <strain>ATCC 25196 / NCIMB 11849 / C 71</strain>
    </source>
</reference>
<gene>
    <name type="ordered locus">Nmul_A0381</name>
</gene>
<organism>
    <name type="scientific">Nitrosospira multiformis (strain ATCC 25196 / NCIMB 11849 / C 71)</name>
    <dbReference type="NCBI Taxonomy" id="323848"/>
    <lineage>
        <taxon>Bacteria</taxon>
        <taxon>Pseudomonadati</taxon>
        <taxon>Pseudomonadota</taxon>
        <taxon>Betaproteobacteria</taxon>
        <taxon>Nitrosomonadales</taxon>
        <taxon>Nitrosomonadaceae</taxon>
        <taxon>Nitrosospira</taxon>
    </lineage>
</organism>
<proteinExistence type="inferred from homology"/>
<name>FETP_NITMU</name>
<evidence type="ECO:0000255" key="1">
    <source>
        <dbReference type="HAMAP-Rule" id="MF_00686"/>
    </source>
</evidence>
<keyword id="KW-0408">Iron</keyword>
<keyword id="KW-1185">Reference proteome</keyword>
<comment type="function">
    <text evidence="1">Could be a mediator in iron transactions between iron acquisition and iron-requiring processes, such as synthesis and/or repair of Fe-S clusters in biosynthetic enzymes.</text>
</comment>
<comment type="similarity">
    <text evidence="1">Belongs to the Fe(2+)-trafficking protein family.</text>
</comment>